<dbReference type="EC" id="3.1.3.5" evidence="1"/>
<dbReference type="EMBL" id="AE016825">
    <property type="protein sequence ID" value="AAQ61341.1"/>
    <property type="molecule type" value="Genomic_DNA"/>
</dbReference>
<dbReference type="RefSeq" id="WP_011137226.1">
    <property type="nucleotide sequence ID" value="NC_005085.1"/>
</dbReference>
<dbReference type="SMR" id="Q7NRV1"/>
<dbReference type="STRING" id="243365.CV_3679"/>
<dbReference type="KEGG" id="cvi:CV_3679"/>
<dbReference type="eggNOG" id="COG0496">
    <property type="taxonomic scope" value="Bacteria"/>
</dbReference>
<dbReference type="HOGENOM" id="CLU_045192_1_2_4"/>
<dbReference type="OrthoDB" id="9780815at2"/>
<dbReference type="Proteomes" id="UP000001424">
    <property type="component" value="Chromosome"/>
</dbReference>
<dbReference type="GO" id="GO:0005737">
    <property type="term" value="C:cytoplasm"/>
    <property type="evidence" value="ECO:0007669"/>
    <property type="project" value="UniProtKB-SubCell"/>
</dbReference>
<dbReference type="GO" id="GO:0008254">
    <property type="term" value="F:3'-nucleotidase activity"/>
    <property type="evidence" value="ECO:0007669"/>
    <property type="project" value="TreeGrafter"/>
</dbReference>
<dbReference type="GO" id="GO:0008253">
    <property type="term" value="F:5'-nucleotidase activity"/>
    <property type="evidence" value="ECO:0007669"/>
    <property type="project" value="UniProtKB-UniRule"/>
</dbReference>
<dbReference type="GO" id="GO:0004309">
    <property type="term" value="F:exopolyphosphatase activity"/>
    <property type="evidence" value="ECO:0007669"/>
    <property type="project" value="TreeGrafter"/>
</dbReference>
<dbReference type="GO" id="GO:0046872">
    <property type="term" value="F:metal ion binding"/>
    <property type="evidence" value="ECO:0007669"/>
    <property type="project" value="UniProtKB-UniRule"/>
</dbReference>
<dbReference type="GO" id="GO:0000166">
    <property type="term" value="F:nucleotide binding"/>
    <property type="evidence" value="ECO:0007669"/>
    <property type="project" value="UniProtKB-KW"/>
</dbReference>
<dbReference type="FunFam" id="3.40.1210.10:FF:000001">
    <property type="entry name" value="5'/3'-nucleotidase SurE"/>
    <property type="match status" value="1"/>
</dbReference>
<dbReference type="Gene3D" id="3.40.1210.10">
    <property type="entry name" value="Survival protein SurE-like phosphatase/nucleotidase"/>
    <property type="match status" value="1"/>
</dbReference>
<dbReference type="HAMAP" id="MF_00060">
    <property type="entry name" value="SurE"/>
    <property type="match status" value="1"/>
</dbReference>
<dbReference type="InterPro" id="IPR030048">
    <property type="entry name" value="SurE"/>
</dbReference>
<dbReference type="InterPro" id="IPR002828">
    <property type="entry name" value="SurE-like_Pase/nucleotidase"/>
</dbReference>
<dbReference type="InterPro" id="IPR036523">
    <property type="entry name" value="SurE-like_sf"/>
</dbReference>
<dbReference type="NCBIfam" id="NF001489">
    <property type="entry name" value="PRK00346.1-3"/>
    <property type="match status" value="1"/>
</dbReference>
<dbReference type="NCBIfam" id="NF001490">
    <property type="entry name" value="PRK00346.1-4"/>
    <property type="match status" value="1"/>
</dbReference>
<dbReference type="NCBIfam" id="TIGR00087">
    <property type="entry name" value="surE"/>
    <property type="match status" value="1"/>
</dbReference>
<dbReference type="PANTHER" id="PTHR30457">
    <property type="entry name" value="5'-NUCLEOTIDASE SURE"/>
    <property type="match status" value="1"/>
</dbReference>
<dbReference type="PANTHER" id="PTHR30457:SF12">
    <property type="entry name" value="5'_3'-NUCLEOTIDASE SURE"/>
    <property type="match status" value="1"/>
</dbReference>
<dbReference type="Pfam" id="PF01975">
    <property type="entry name" value="SurE"/>
    <property type="match status" value="1"/>
</dbReference>
<dbReference type="SUPFAM" id="SSF64167">
    <property type="entry name" value="SurE-like"/>
    <property type="match status" value="1"/>
</dbReference>
<protein>
    <recommendedName>
        <fullName evidence="1">5'-nucleotidase SurE</fullName>
        <ecNumber evidence="1">3.1.3.5</ecNumber>
    </recommendedName>
    <alternativeName>
        <fullName evidence="1">Nucleoside 5'-monophosphate phosphohydrolase</fullName>
    </alternativeName>
</protein>
<reference key="1">
    <citation type="journal article" date="2003" name="Proc. Natl. Acad. Sci. U.S.A.">
        <title>The complete genome sequence of Chromobacterium violaceum reveals remarkable and exploitable bacterial adaptability.</title>
        <authorList>
            <person name="Vasconcelos A.T.R."/>
            <person name="de Almeida D.F."/>
            <person name="Hungria M."/>
            <person name="Guimaraes C.T."/>
            <person name="Antonio R.V."/>
            <person name="Almeida F.C."/>
            <person name="de Almeida L.G.P."/>
            <person name="de Almeida R."/>
            <person name="Alves-Gomes J.A."/>
            <person name="Andrade E.M."/>
            <person name="Araripe J."/>
            <person name="de Araujo M.F.F."/>
            <person name="Astolfi-Filho S."/>
            <person name="Azevedo V."/>
            <person name="Baptista A.J."/>
            <person name="Bataus L.A.M."/>
            <person name="Batista J.S."/>
            <person name="Belo A."/>
            <person name="van den Berg C."/>
            <person name="Bogo M."/>
            <person name="Bonatto S."/>
            <person name="Bordignon J."/>
            <person name="Brigido M.M."/>
            <person name="Brito C.A."/>
            <person name="Brocchi M."/>
            <person name="Burity H.A."/>
            <person name="Camargo A.A."/>
            <person name="Cardoso D.D.P."/>
            <person name="Carneiro N.P."/>
            <person name="Carraro D.M."/>
            <person name="Carvalho C.M.B."/>
            <person name="Cascardo J.C.M."/>
            <person name="Cavada B.S."/>
            <person name="Chueire L.M.O."/>
            <person name="Creczynski-Pasa T.B."/>
            <person name="Cunha-Junior N.C."/>
            <person name="Fagundes N."/>
            <person name="Falcao C.L."/>
            <person name="Fantinatti F."/>
            <person name="Farias I.P."/>
            <person name="Felipe M.S.S."/>
            <person name="Ferrari L.P."/>
            <person name="Ferro J.A."/>
            <person name="Ferro M.I.T."/>
            <person name="Franco G.R."/>
            <person name="Freitas N.S.A."/>
            <person name="Furlan L.R."/>
            <person name="Gazzinelli R.T."/>
            <person name="Gomes E.A."/>
            <person name="Goncalves P.R."/>
            <person name="Grangeiro T.B."/>
            <person name="Grattapaglia D."/>
            <person name="Grisard E.C."/>
            <person name="Hanna E.S."/>
            <person name="Jardim S.N."/>
            <person name="Laurino J."/>
            <person name="Leoi L.C.T."/>
            <person name="Lima L.F.A."/>
            <person name="Loureiro M.F."/>
            <person name="Lyra M.C.C.P."/>
            <person name="Madeira H.M.F."/>
            <person name="Manfio G.P."/>
            <person name="Maranhao A.Q."/>
            <person name="Martins W.S."/>
            <person name="di Mauro S.M.Z."/>
            <person name="de Medeiros S.R.B."/>
            <person name="Meissner R.V."/>
            <person name="Moreira M.A.M."/>
            <person name="Nascimento F.F."/>
            <person name="Nicolas M.F."/>
            <person name="Oliveira J.G."/>
            <person name="Oliveira S.C."/>
            <person name="Paixao R.F.C."/>
            <person name="Parente J.A."/>
            <person name="Pedrosa F.O."/>
            <person name="Pena S.D.J."/>
            <person name="Pereira J.O."/>
            <person name="Pereira M."/>
            <person name="Pinto L.S.R.C."/>
            <person name="Pinto L.S."/>
            <person name="Porto J.I.R."/>
            <person name="Potrich D.P."/>
            <person name="Ramalho-Neto C.E."/>
            <person name="Reis A.M.M."/>
            <person name="Rigo L.U."/>
            <person name="Rondinelli E."/>
            <person name="Santos E.B.P."/>
            <person name="Santos F.R."/>
            <person name="Schneider M.P.C."/>
            <person name="Seuanez H.N."/>
            <person name="Silva A.M.R."/>
            <person name="da Silva A.L.C."/>
            <person name="Silva D.W."/>
            <person name="Silva R."/>
            <person name="Simoes I.C."/>
            <person name="Simon D."/>
            <person name="Soares C.M.A."/>
            <person name="Soares R.B.A."/>
            <person name="Souza E.M."/>
            <person name="Souza K.R.L."/>
            <person name="Souza R.C."/>
            <person name="Steffens M.B.R."/>
            <person name="Steindel M."/>
            <person name="Teixeira S.R."/>
            <person name="Urmenyi T."/>
            <person name="Vettore A."/>
            <person name="Wassem R."/>
            <person name="Zaha A."/>
            <person name="Simpson A.J.G."/>
        </authorList>
    </citation>
    <scope>NUCLEOTIDE SEQUENCE [LARGE SCALE GENOMIC DNA]</scope>
    <source>
        <strain>ATCC 12472 / DSM 30191 / JCM 1249 / CCUG 213 / NBRC 12614 / NCIMB 9131 / NCTC 9757 / MK</strain>
    </source>
</reference>
<gene>
    <name evidence="1" type="primary">surE</name>
    <name type="ordered locus">CV_3679</name>
</gene>
<evidence type="ECO:0000255" key="1">
    <source>
        <dbReference type="HAMAP-Rule" id="MF_00060"/>
    </source>
</evidence>
<comment type="function">
    <text evidence="1">Nucleotidase that shows phosphatase activity on nucleoside 5'-monophosphates.</text>
</comment>
<comment type="catalytic activity">
    <reaction evidence="1">
        <text>a ribonucleoside 5'-phosphate + H2O = a ribonucleoside + phosphate</text>
        <dbReference type="Rhea" id="RHEA:12484"/>
        <dbReference type="ChEBI" id="CHEBI:15377"/>
        <dbReference type="ChEBI" id="CHEBI:18254"/>
        <dbReference type="ChEBI" id="CHEBI:43474"/>
        <dbReference type="ChEBI" id="CHEBI:58043"/>
        <dbReference type="EC" id="3.1.3.5"/>
    </reaction>
</comment>
<comment type="cofactor">
    <cofactor evidence="1">
        <name>a divalent metal cation</name>
        <dbReference type="ChEBI" id="CHEBI:60240"/>
    </cofactor>
    <text evidence="1">Binds 1 divalent metal cation per subunit.</text>
</comment>
<comment type="subcellular location">
    <subcellularLocation>
        <location evidence="1">Cytoplasm</location>
    </subcellularLocation>
</comment>
<comment type="similarity">
    <text evidence="1">Belongs to the SurE nucleotidase family.</text>
</comment>
<proteinExistence type="inferred from homology"/>
<keyword id="KW-0963">Cytoplasm</keyword>
<keyword id="KW-0378">Hydrolase</keyword>
<keyword id="KW-0479">Metal-binding</keyword>
<keyword id="KW-0547">Nucleotide-binding</keyword>
<keyword id="KW-1185">Reference proteome</keyword>
<accession>Q7NRV1</accession>
<feature type="chain" id="PRO_0000111805" description="5'-nucleotidase SurE">
    <location>
        <begin position="1"/>
        <end position="247"/>
    </location>
</feature>
<feature type="binding site" evidence="1">
    <location>
        <position position="8"/>
    </location>
    <ligand>
        <name>a divalent metal cation</name>
        <dbReference type="ChEBI" id="CHEBI:60240"/>
    </ligand>
</feature>
<feature type="binding site" evidence="1">
    <location>
        <position position="9"/>
    </location>
    <ligand>
        <name>a divalent metal cation</name>
        <dbReference type="ChEBI" id="CHEBI:60240"/>
    </ligand>
</feature>
<feature type="binding site" evidence="1">
    <location>
        <position position="39"/>
    </location>
    <ligand>
        <name>a divalent metal cation</name>
        <dbReference type="ChEBI" id="CHEBI:60240"/>
    </ligand>
</feature>
<feature type="binding site" evidence="1">
    <location>
        <position position="91"/>
    </location>
    <ligand>
        <name>a divalent metal cation</name>
        <dbReference type="ChEBI" id="CHEBI:60240"/>
    </ligand>
</feature>
<organism>
    <name type="scientific">Chromobacterium violaceum (strain ATCC 12472 / DSM 30191 / JCM 1249 / CCUG 213 / NBRC 12614 / NCIMB 9131 / NCTC 9757 / MK)</name>
    <dbReference type="NCBI Taxonomy" id="243365"/>
    <lineage>
        <taxon>Bacteria</taxon>
        <taxon>Pseudomonadati</taxon>
        <taxon>Pseudomonadota</taxon>
        <taxon>Betaproteobacteria</taxon>
        <taxon>Neisseriales</taxon>
        <taxon>Chromobacteriaceae</taxon>
        <taxon>Chromobacterium</taxon>
    </lineage>
</organism>
<name>SURE_CHRVO</name>
<sequence length="247" mass="26443">MKFLLSNDDGYFAPGLAMLAQTLQRYGEVVVVAPERDRSGASNSLTLDRPLTVRKAANGFHYVNGTPTDCVHLAVTGFLDFRPNMIFTGINHGPNMGDDTLYSGTVAAATEGFMLGIPSVAVSLAGHSGKHFASAGKVVEQLVERCLEEPFQQPVLLNVNVPDAPPEEVGALQVTRLGRRHAAQPVIKSQNPRGETIYWVGPVGAVQDAGAGTDFGCVASKQVSVTPLMLDLTAYGQLDRISTWLHR</sequence>